<gene>
    <name type="primary">PET122</name>
</gene>
<protein>
    <recommendedName>
        <fullName>Protein PET122, mitochondrial</fullName>
    </recommendedName>
</protein>
<reference key="1">
    <citation type="submission" date="1997-09" db="EMBL/GenBank/DDBJ databases">
        <authorList>
            <person name="Costanzo M.C."/>
            <person name="Fox T.D."/>
        </authorList>
    </citation>
    <scope>NUCLEOTIDE SEQUENCE [GENOMIC DNA]</scope>
    <source>
        <strain>ATCC 58438 / CBS 3082 / BCRC 21498 / NBRC 1685 / JCM 7257 / NCYC 543 / NRRL Y-12651</strain>
    </source>
</reference>
<name>PT122_LACK1</name>
<sequence length="312" mass="37317">MIPTFRIQIRRYLNTEVKRRLYAQCLNRDFDSLLAEVKGIPVSEMEESFVTLYLMKSAQFGHVPSLDYLWHKYVMRHHMIMVNPSLLCDIGNIALQEGKLFIPEQLSSHFMKFYGSNNEYEQYRYELLRIQVESFAKGTMEKTSFREKWKVFLQDLDHTVERDFQFSVRDFPHLTQALSGTDRELLLKMLFSEGKISVCNNSSLPMLLNMILLQEEFELEFKIKLFQNFYTIHRHLNYEDTVTILFKNCKGNGYRSIELMEFVRGNKITTPHLAYKYFLQSIIDSEYYFKAYDYMDLVKKYDGLLEQLRQQE</sequence>
<organism>
    <name type="scientific">Lachancea kluyveri (strain ATCC 58438 / CBS 3082 / BCRC 21498 / NBRC 1685 / JCM 7257 / NCYC 543 / NRRL Y-12651)</name>
    <name type="common">Yeast</name>
    <name type="synonym">Saccharomyces kluyveri</name>
    <dbReference type="NCBI Taxonomy" id="226302"/>
    <lineage>
        <taxon>Eukaryota</taxon>
        <taxon>Fungi</taxon>
        <taxon>Dikarya</taxon>
        <taxon>Ascomycota</taxon>
        <taxon>Saccharomycotina</taxon>
        <taxon>Saccharomycetes</taxon>
        <taxon>Saccharomycetales</taxon>
        <taxon>Saccharomycetaceae</taxon>
        <taxon>Lachancea</taxon>
    </lineage>
</organism>
<accession>O13377</accession>
<evidence type="ECO:0000250" key="1"/>
<comment type="function">
    <text evidence="1">Required for expression of the mitochondrial gene for cytochrome c oxidase subunit 3 (COX3). PET122 seems to work by directly interacting with the small ribosomal subunit to promote translation initiation on the COX3 mRNA (By similarity).</text>
</comment>
<comment type="subcellular location">
    <subcellularLocation>
        <location evidence="1">Mitochondrion inner membrane</location>
        <topology evidence="1">Peripheral membrane protein</topology>
    </subcellularLocation>
</comment>
<proteinExistence type="inferred from homology"/>
<feature type="transit peptide" description="Mitochondrion" evidence="1">
    <location>
        <begin position="1"/>
        <end position="12"/>
    </location>
</feature>
<feature type="chain" id="PRO_0000022176" description="Protein PET122, mitochondrial">
    <location>
        <begin position="13"/>
        <end position="312"/>
    </location>
</feature>
<dbReference type="EMBL" id="AF026396">
    <property type="protein sequence ID" value="AAB82603.1"/>
    <property type="molecule type" value="Genomic_DNA"/>
</dbReference>
<dbReference type="GO" id="GO:0005743">
    <property type="term" value="C:mitochondrial inner membrane"/>
    <property type="evidence" value="ECO:0007669"/>
    <property type="project" value="UniProtKB-SubCell"/>
</dbReference>
<dbReference type="GO" id="GO:0003743">
    <property type="term" value="F:translation initiation factor activity"/>
    <property type="evidence" value="ECO:0007669"/>
    <property type="project" value="InterPro"/>
</dbReference>
<dbReference type="GO" id="GO:0070131">
    <property type="term" value="P:positive regulation of mitochondrial translation"/>
    <property type="evidence" value="ECO:0007669"/>
    <property type="project" value="InterPro"/>
</dbReference>
<dbReference type="InterPro" id="IPR008732">
    <property type="entry name" value="Pet122"/>
</dbReference>
<dbReference type="Pfam" id="PF05476">
    <property type="entry name" value="PET122"/>
    <property type="match status" value="1"/>
</dbReference>
<dbReference type="PIRSF" id="PIRSF003326">
    <property type="entry name" value="PET122"/>
    <property type="match status" value="1"/>
</dbReference>
<keyword id="KW-0010">Activator</keyword>
<keyword id="KW-0472">Membrane</keyword>
<keyword id="KW-0496">Mitochondrion</keyword>
<keyword id="KW-0999">Mitochondrion inner membrane</keyword>
<keyword id="KW-0809">Transit peptide</keyword>
<keyword id="KW-0810">Translation regulation</keyword>